<evidence type="ECO:0000250" key="1"/>
<evidence type="ECO:0000250" key="2">
    <source>
        <dbReference type="UniProtKB" id="Q15404"/>
    </source>
</evidence>
<evidence type="ECO:0000256" key="3">
    <source>
        <dbReference type="SAM" id="MobiDB-lite"/>
    </source>
</evidence>
<proteinExistence type="evidence at transcript level"/>
<dbReference type="EMBL" id="BT021000">
    <property type="protein sequence ID" value="AAX09017.1"/>
    <property type="molecule type" value="mRNA"/>
</dbReference>
<dbReference type="EMBL" id="BC102118">
    <property type="protein sequence ID" value="AAI02119.1"/>
    <property type="molecule type" value="mRNA"/>
</dbReference>
<dbReference type="RefSeq" id="NP_001035691.1">
    <property type="nucleotide sequence ID" value="NM_001040601.2"/>
</dbReference>
<dbReference type="SMR" id="Q5E9C0"/>
<dbReference type="FunCoup" id="Q5E9C0">
    <property type="interactions" value="2586"/>
</dbReference>
<dbReference type="STRING" id="9913.ENSBTAP00000068837"/>
<dbReference type="PaxDb" id="9913-ENSBTAP00000039209"/>
<dbReference type="GeneID" id="617534"/>
<dbReference type="KEGG" id="bta:617534"/>
<dbReference type="CTD" id="6251"/>
<dbReference type="VEuPathDB" id="HostDB:ENSBTAG00000027446"/>
<dbReference type="eggNOG" id="KOG0617">
    <property type="taxonomic scope" value="Eukaryota"/>
</dbReference>
<dbReference type="HOGENOM" id="CLU_000288_18_15_1"/>
<dbReference type="InParanoid" id="Q5E9C0"/>
<dbReference type="OMA" id="RHMQGGR"/>
<dbReference type="OrthoDB" id="676979at2759"/>
<dbReference type="TreeFam" id="TF314790"/>
<dbReference type="Proteomes" id="UP000009136">
    <property type="component" value="Chromosome 13"/>
</dbReference>
<dbReference type="Bgee" id="ENSBTAG00000027446">
    <property type="expression patterns" value="Expressed in myometrium and 105 other cell types or tissues"/>
</dbReference>
<dbReference type="GO" id="GO:0016605">
    <property type="term" value="C:PML body"/>
    <property type="evidence" value="ECO:0000318"/>
    <property type="project" value="GO_Central"/>
</dbReference>
<dbReference type="FunFam" id="3.80.10.10:FF:000034">
    <property type="entry name" value="Ras suppressor protein 1"/>
    <property type="match status" value="1"/>
</dbReference>
<dbReference type="FunFam" id="3.80.10.10:FF:000159">
    <property type="entry name" value="Ras suppressor protein 1"/>
    <property type="match status" value="1"/>
</dbReference>
<dbReference type="Gene3D" id="3.80.10.10">
    <property type="entry name" value="Ribonuclease Inhibitor"/>
    <property type="match status" value="2"/>
</dbReference>
<dbReference type="InterPro" id="IPR001611">
    <property type="entry name" value="Leu-rich_rpt"/>
</dbReference>
<dbReference type="InterPro" id="IPR025875">
    <property type="entry name" value="Leu-rich_rpt_4"/>
</dbReference>
<dbReference type="InterPro" id="IPR003591">
    <property type="entry name" value="Leu-rich_rpt_typical-subtyp"/>
</dbReference>
<dbReference type="InterPro" id="IPR032675">
    <property type="entry name" value="LRR_dom_sf"/>
</dbReference>
<dbReference type="InterPro" id="IPR050216">
    <property type="entry name" value="LRR_domain-containing"/>
</dbReference>
<dbReference type="InterPro" id="IPR055414">
    <property type="entry name" value="LRR_R13L4/SHOC2-like"/>
</dbReference>
<dbReference type="PANTHER" id="PTHR48051">
    <property type="match status" value="1"/>
</dbReference>
<dbReference type="PANTHER" id="PTHR48051:SF1">
    <property type="entry name" value="RAS SUPPRESSOR PROTEIN 1"/>
    <property type="match status" value="1"/>
</dbReference>
<dbReference type="Pfam" id="PF00560">
    <property type="entry name" value="LRR_1"/>
    <property type="match status" value="1"/>
</dbReference>
<dbReference type="Pfam" id="PF23598">
    <property type="entry name" value="LRR_14"/>
    <property type="match status" value="1"/>
</dbReference>
<dbReference type="Pfam" id="PF12799">
    <property type="entry name" value="LRR_4"/>
    <property type="match status" value="1"/>
</dbReference>
<dbReference type="SMART" id="SM00364">
    <property type="entry name" value="LRR_BAC"/>
    <property type="match status" value="5"/>
</dbReference>
<dbReference type="SMART" id="SM00369">
    <property type="entry name" value="LRR_TYP"/>
    <property type="match status" value="7"/>
</dbReference>
<dbReference type="SUPFAM" id="SSF52058">
    <property type="entry name" value="L domain-like"/>
    <property type="match status" value="1"/>
</dbReference>
<dbReference type="PROSITE" id="PS51450">
    <property type="entry name" value="LRR"/>
    <property type="match status" value="7"/>
</dbReference>
<feature type="initiator methionine" description="Removed" evidence="2">
    <location>
        <position position="1"/>
    </location>
</feature>
<feature type="chain" id="PRO_0000273968" description="Ras suppressor protein 1">
    <location>
        <begin position="2"/>
        <end position="276"/>
    </location>
</feature>
<feature type="repeat" description="LRR 1">
    <location>
        <begin position="41"/>
        <end position="63"/>
    </location>
</feature>
<feature type="repeat" description="LRR 2">
    <location>
        <begin position="64"/>
        <end position="85"/>
    </location>
</feature>
<feature type="repeat" description="LRR 3">
    <location>
        <begin position="87"/>
        <end position="109"/>
    </location>
</feature>
<feature type="repeat" description="LRR 4">
    <location>
        <begin position="110"/>
        <end position="133"/>
    </location>
</feature>
<feature type="repeat" description="LRR 5">
    <location>
        <begin position="135"/>
        <end position="156"/>
    </location>
</feature>
<feature type="repeat" description="LRR 6">
    <location>
        <begin position="158"/>
        <end position="179"/>
    </location>
</feature>
<feature type="repeat" description="LRR 7">
    <location>
        <begin position="181"/>
        <end position="202"/>
    </location>
</feature>
<feature type="region of interest" description="Disordered" evidence="3">
    <location>
        <begin position="1"/>
        <end position="23"/>
    </location>
</feature>
<feature type="region of interest" description="Disordered" evidence="3">
    <location>
        <begin position="250"/>
        <end position="277"/>
    </location>
</feature>
<feature type="compositionally biased region" description="Basic and acidic residues" evidence="3">
    <location>
        <begin position="7"/>
        <end position="23"/>
    </location>
</feature>
<feature type="compositionally biased region" description="Basic and acidic residues" evidence="3">
    <location>
        <begin position="256"/>
        <end position="265"/>
    </location>
</feature>
<feature type="modified residue" description="N-acetylserine" evidence="2">
    <location>
        <position position="2"/>
    </location>
</feature>
<keyword id="KW-0007">Acetylation</keyword>
<keyword id="KW-0433">Leucine-rich repeat</keyword>
<keyword id="KW-1185">Reference proteome</keyword>
<keyword id="KW-0677">Repeat</keyword>
<reference key="1">
    <citation type="journal article" date="2005" name="BMC Genomics">
        <title>Characterization of 954 bovine full-CDS cDNA sequences.</title>
        <authorList>
            <person name="Harhay G.P."/>
            <person name="Sonstegard T.S."/>
            <person name="Keele J.W."/>
            <person name="Heaton M.P."/>
            <person name="Clawson M.L."/>
            <person name="Snelling W.M."/>
            <person name="Wiedmann R.T."/>
            <person name="Van Tassell C.P."/>
            <person name="Smith T.P.L."/>
        </authorList>
    </citation>
    <scope>NUCLEOTIDE SEQUENCE [LARGE SCALE MRNA]</scope>
</reference>
<reference key="2">
    <citation type="submission" date="2005-08" db="EMBL/GenBank/DDBJ databases">
        <authorList>
            <consortium name="NIH - Mammalian Gene Collection (MGC) project"/>
        </authorList>
    </citation>
    <scope>NUCLEOTIDE SEQUENCE [LARGE SCALE MRNA]</scope>
    <source>
        <strain>Crossbred X Angus</strain>
        <tissue>Ileum</tissue>
    </source>
</reference>
<protein>
    <recommendedName>
        <fullName>Ras suppressor protein 1</fullName>
        <shortName>Rsu-1</shortName>
    </recommendedName>
</protein>
<sequence length="277" mass="31537">MSKSLKKLVEESREKNQPEVDMSDRGISNMLDINGLFTLSHITQLVLSHNKLTTVPPNIAELKNLEVLNFFNNQIEELPTQISSLQKLKHLNLGMNRLNTLPRGFGSLPALEVLDLTYNNLNENSLPGNFFYLTTLRALYLSDNDFEILPPDIGKLTKLQILSLRDNDLISLPKEIGELTQLKELHIQGNRLTVLPPELGNLDLTGQKQIFKAENNPWVTPIADQFQLGVSHVFEYIRSETYKYLYGRHMQANPEPPKKNNDKSKKISRKPLAAKNK</sequence>
<comment type="function">
    <text evidence="1">Potentially plays a role in the Ras signal transduction pathway. Capable of suppressing v-Ras transformation in vitro (By similarity).</text>
</comment>
<accession>Q5E9C0</accession>
<name>RSU1_BOVIN</name>
<gene>
    <name type="primary">RSU1</name>
</gene>
<organism>
    <name type="scientific">Bos taurus</name>
    <name type="common">Bovine</name>
    <dbReference type="NCBI Taxonomy" id="9913"/>
    <lineage>
        <taxon>Eukaryota</taxon>
        <taxon>Metazoa</taxon>
        <taxon>Chordata</taxon>
        <taxon>Craniata</taxon>
        <taxon>Vertebrata</taxon>
        <taxon>Euteleostomi</taxon>
        <taxon>Mammalia</taxon>
        <taxon>Eutheria</taxon>
        <taxon>Laurasiatheria</taxon>
        <taxon>Artiodactyla</taxon>
        <taxon>Ruminantia</taxon>
        <taxon>Pecora</taxon>
        <taxon>Bovidae</taxon>
        <taxon>Bovinae</taxon>
        <taxon>Bos</taxon>
    </lineage>
</organism>